<reference key="1">
    <citation type="journal article" date="1999" name="DNA Res.">
        <title>Complete genome sequence of an aerobic hyper-thermophilic crenarchaeon, Aeropyrum pernix K1.</title>
        <authorList>
            <person name="Kawarabayasi Y."/>
            <person name="Hino Y."/>
            <person name="Horikawa H."/>
            <person name="Yamazaki S."/>
            <person name="Haikawa Y."/>
            <person name="Jin-no K."/>
            <person name="Takahashi M."/>
            <person name="Sekine M."/>
            <person name="Baba S."/>
            <person name="Ankai A."/>
            <person name="Kosugi H."/>
            <person name="Hosoyama A."/>
            <person name="Fukui S."/>
            <person name="Nagai Y."/>
            <person name="Nishijima K."/>
            <person name="Nakazawa H."/>
            <person name="Takamiya M."/>
            <person name="Masuda S."/>
            <person name="Funahashi T."/>
            <person name="Tanaka T."/>
            <person name="Kudoh Y."/>
            <person name="Yamazaki J."/>
            <person name="Kushida N."/>
            <person name="Oguchi A."/>
            <person name="Aoki K."/>
            <person name="Kubota K."/>
            <person name="Nakamura Y."/>
            <person name="Nomura N."/>
            <person name="Sako Y."/>
            <person name="Kikuchi H."/>
        </authorList>
    </citation>
    <scope>NUCLEOTIDE SEQUENCE [LARGE SCALE GENOMIC DNA]</scope>
    <source>
        <strain>ATCC 700893 / DSM 11879 / JCM 9820 / NBRC 100138 / K1</strain>
    </source>
</reference>
<keyword id="KW-1185">Reference proteome</keyword>
<keyword id="KW-0678">Repressor</keyword>
<keyword id="KW-0687">Ribonucleoprotein</keyword>
<keyword id="KW-0689">Ribosomal protein</keyword>
<keyword id="KW-0694">RNA-binding</keyword>
<keyword id="KW-0699">rRNA-binding</keyword>
<keyword id="KW-0810">Translation regulation</keyword>
<keyword id="KW-0820">tRNA-binding</keyword>
<feature type="chain" id="PRO_0000125792" description="Large ribosomal subunit protein uL1">
    <location>
        <begin position="1"/>
        <end position="217"/>
    </location>
</feature>
<comment type="function">
    <text evidence="1">Binds directly to 23S rRNA. Probably involved in E site tRNA release.</text>
</comment>
<comment type="function">
    <text evidence="1">Protein L1 is also a translational repressor protein, it controls the translation of its operon by binding to its mRNA.</text>
</comment>
<comment type="subunit">
    <text evidence="1">Part of the 50S ribosomal subunit.</text>
</comment>
<comment type="similarity">
    <text evidence="1">Belongs to the universal ribosomal protein uL1 family.</text>
</comment>
<evidence type="ECO:0000255" key="1">
    <source>
        <dbReference type="HAMAP-Rule" id="MF_01318"/>
    </source>
</evidence>
<evidence type="ECO:0000305" key="2"/>
<sequence>MSQETVLASIEEAIDKSLKLGRGKRFKQSVEIIVALKDIDLKSPQARIRETVFLPNRPPKEAKVCVVAHGDMELQAKEAGVEVLNRQDLQNLSQNKREVKKLARRCYWVLVRADLMGLAGRILGPALGPRGKAPVPVPPNANIKDLIERYKAAVWVRIRNQPQVMARIGTEDMSPRELAENALAVLQVIENRLGRGKISRIYVKKTMGPPVEVPAIG</sequence>
<proteinExistence type="inferred from homology"/>
<name>RL1_AERPE</name>
<organism>
    <name type="scientific">Aeropyrum pernix (strain ATCC 700893 / DSM 11879 / JCM 9820 / NBRC 100138 / K1)</name>
    <dbReference type="NCBI Taxonomy" id="272557"/>
    <lineage>
        <taxon>Archaea</taxon>
        <taxon>Thermoproteota</taxon>
        <taxon>Thermoprotei</taxon>
        <taxon>Desulfurococcales</taxon>
        <taxon>Desulfurococcaceae</taxon>
        <taxon>Aeropyrum</taxon>
    </lineage>
</organism>
<protein>
    <recommendedName>
        <fullName evidence="1">Large ribosomal subunit protein uL1</fullName>
    </recommendedName>
    <alternativeName>
        <fullName evidence="2">50S ribosomal protein L1</fullName>
    </alternativeName>
</protein>
<gene>
    <name evidence="1" type="primary">rpl1</name>
    <name type="ordered locus">APE_2173.1</name>
</gene>
<dbReference type="EMBL" id="BA000002">
    <property type="protein sequence ID" value="BAA81184.2"/>
    <property type="molecule type" value="Genomic_DNA"/>
</dbReference>
<dbReference type="PIR" id="H72524">
    <property type="entry name" value="H72524"/>
</dbReference>
<dbReference type="RefSeq" id="WP_010866842.1">
    <property type="nucleotide sequence ID" value="NC_000854.2"/>
</dbReference>
<dbReference type="SMR" id="Q9Y9W6"/>
<dbReference type="STRING" id="272557.APE_2173.1"/>
<dbReference type="EnsemblBacteria" id="BAA81184">
    <property type="protein sequence ID" value="BAA81184"/>
    <property type="gene ID" value="APE_2173.1"/>
</dbReference>
<dbReference type="GeneID" id="1445240"/>
<dbReference type="KEGG" id="ape:APE_2173.1"/>
<dbReference type="PATRIC" id="fig|272557.25.peg.1449"/>
<dbReference type="eggNOG" id="arCOG04289">
    <property type="taxonomic scope" value="Archaea"/>
</dbReference>
<dbReference type="Proteomes" id="UP000002518">
    <property type="component" value="Chromosome"/>
</dbReference>
<dbReference type="GO" id="GO:0015934">
    <property type="term" value="C:large ribosomal subunit"/>
    <property type="evidence" value="ECO:0007669"/>
    <property type="project" value="InterPro"/>
</dbReference>
<dbReference type="GO" id="GO:0019843">
    <property type="term" value="F:rRNA binding"/>
    <property type="evidence" value="ECO:0007669"/>
    <property type="project" value="UniProtKB-UniRule"/>
</dbReference>
<dbReference type="GO" id="GO:0003735">
    <property type="term" value="F:structural constituent of ribosome"/>
    <property type="evidence" value="ECO:0007669"/>
    <property type="project" value="InterPro"/>
</dbReference>
<dbReference type="GO" id="GO:0000049">
    <property type="term" value="F:tRNA binding"/>
    <property type="evidence" value="ECO:0007669"/>
    <property type="project" value="UniProtKB-KW"/>
</dbReference>
<dbReference type="GO" id="GO:0006417">
    <property type="term" value="P:regulation of translation"/>
    <property type="evidence" value="ECO:0007669"/>
    <property type="project" value="UniProtKB-KW"/>
</dbReference>
<dbReference type="GO" id="GO:0006412">
    <property type="term" value="P:translation"/>
    <property type="evidence" value="ECO:0007669"/>
    <property type="project" value="UniProtKB-UniRule"/>
</dbReference>
<dbReference type="CDD" id="cd00403">
    <property type="entry name" value="Ribosomal_L1"/>
    <property type="match status" value="1"/>
</dbReference>
<dbReference type="FunFam" id="3.40.50.790:FF:000005">
    <property type="entry name" value="50S ribosomal protein L1"/>
    <property type="match status" value="1"/>
</dbReference>
<dbReference type="Gene3D" id="3.30.190.20">
    <property type="match status" value="1"/>
</dbReference>
<dbReference type="Gene3D" id="3.40.50.790">
    <property type="match status" value="1"/>
</dbReference>
<dbReference type="HAMAP" id="MF_01318_A">
    <property type="entry name" value="Ribosomal_uL1_A"/>
    <property type="match status" value="1"/>
</dbReference>
<dbReference type="InterPro" id="IPR002143">
    <property type="entry name" value="Ribosomal_uL1"/>
</dbReference>
<dbReference type="InterPro" id="IPR023674">
    <property type="entry name" value="Ribosomal_uL1-like"/>
</dbReference>
<dbReference type="InterPro" id="IPR028364">
    <property type="entry name" value="Ribosomal_uL1/biogenesis"/>
</dbReference>
<dbReference type="InterPro" id="IPR016095">
    <property type="entry name" value="Ribosomal_uL1_3-a/b-sand"/>
</dbReference>
<dbReference type="InterPro" id="IPR023669">
    <property type="entry name" value="Ribosomal_uL1_arc"/>
</dbReference>
<dbReference type="NCBIfam" id="NF003244">
    <property type="entry name" value="PRK04203.1"/>
    <property type="match status" value="1"/>
</dbReference>
<dbReference type="PANTHER" id="PTHR36427">
    <property type="entry name" value="54S RIBOSOMAL PROTEIN L1, MITOCHONDRIAL"/>
    <property type="match status" value="1"/>
</dbReference>
<dbReference type="PANTHER" id="PTHR36427:SF3">
    <property type="entry name" value="LARGE RIBOSOMAL SUBUNIT PROTEIN UL1M"/>
    <property type="match status" value="1"/>
</dbReference>
<dbReference type="Pfam" id="PF00687">
    <property type="entry name" value="Ribosomal_L1"/>
    <property type="match status" value="1"/>
</dbReference>
<dbReference type="PIRSF" id="PIRSF002155">
    <property type="entry name" value="Ribosomal_L1"/>
    <property type="match status" value="1"/>
</dbReference>
<dbReference type="SUPFAM" id="SSF56808">
    <property type="entry name" value="Ribosomal protein L1"/>
    <property type="match status" value="1"/>
</dbReference>
<accession>Q9Y9W6</accession>